<evidence type="ECO:0000250" key="1"/>
<evidence type="ECO:0000255" key="2">
    <source>
        <dbReference type="HAMAP-Rule" id="MF_00403"/>
    </source>
</evidence>
<evidence type="ECO:0000305" key="3"/>
<keyword id="KW-0488">Methylation</keyword>
<keyword id="KW-0687">Ribonucleoprotein</keyword>
<keyword id="KW-0689">Ribosomal protein</keyword>
<keyword id="KW-0694">RNA-binding</keyword>
<keyword id="KW-0699">rRNA-binding</keyword>
<keyword id="KW-0820">tRNA-binding</keyword>
<protein>
    <recommendedName>
        <fullName evidence="2">Small ribosomal subunit protein uS12</fullName>
    </recommendedName>
    <alternativeName>
        <fullName evidence="3">30S ribosomal protein S12</fullName>
    </alternativeName>
</protein>
<gene>
    <name evidence="2" type="primary">rpsL</name>
    <name type="ordered locus">BR1238</name>
    <name type="ordered locus">BS1330_I1234</name>
</gene>
<comment type="function">
    <text evidence="2">With S4 and S5 plays an important role in translational accuracy.</text>
</comment>
<comment type="function">
    <text evidence="2">Interacts with and stabilizes bases of the 16S rRNA that are involved in tRNA selection in the A site and with the mRNA backbone. Located at the interface of the 30S and 50S subunits, it traverses the body of the 30S subunit contacting proteins on the other side and probably holding the rRNA structure together. The combined cluster of proteins S8, S12 and S17 appears to hold together the shoulder and platform of the 30S subunit.</text>
</comment>
<comment type="subunit">
    <text evidence="2">Part of the 30S ribosomal subunit. Contacts proteins S8 and S17. May interact with IF1 in the 30S initiation complex.</text>
</comment>
<comment type="similarity">
    <text evidence="2">Belongs to the universal ribosomal protein uS12 family.</text>
</comment>
<feature type="chain" id="PRO_0000146191" description="Small ribosomal subunit protein uS12">
    <location>
        <begin position="1"/>
        <end position="123"/>
    </location>
</feature>
<feature type="modified residue" description="3-methylthioaspartic acid" evidence="1">
    <location>
        <position position="89"/>
    </location>
</feature>
<name>RS12_BRUSU</name>
<accession>P63194</accession>
<accession>G0KAF9</accession>
<accession>Q8YHP5</accession>
<organism>
    <name type="scientific">Brucella suis biovar 1 (strain 1330)</name>
    <dbReference type="NCBI Taxonomy" id="204722"/>
    <lineage>
        <taxon>Bacteria</taxon>
        <taxon>Pseudomonadati</taxon>
        <taxon>Pseudomonadota</taxon>
        <taxon>Alphaproteobacteria</taxon>
        <taxon>Hyphomicrobiales</taxon>
        <taxon>Brucellaceae</taxon>
        <taxon>Brucella/Ochrobactrum group</taxon>
        <taxon>Brucella</taxon>
    </lineage>
</organism>
<reference key="1">
    <citation type="journal article" date="2002" name="Proc. Natl. Acad. Sci. U.S.A.">
        <title>The Brucella suis genome reveals fundamental similarities between animal and plant pathogens and symbionts.</title>
        <authorList>
            <person name="Paulsen I.T."/>
            <person name="Seshadri R."/>
            <person name="Nelson K.E."/>
            <person name="Eisen J.A."/>
            <person name="Heidelberg J.F."/>
            <person name="Read T.D."/>
            <person name="Dodson R.J."/>
            <person name="Umayam L.A."/>
            <person name="Brinkac L.M."/>
            <person name="Beanan M.J."/>
            <person name="Daugherty S.C."/>
            <person name="DeBoy R.T."/>
            <person name="Durkin A.S."/>
            <person name="Kolonay J.F."/>
            <person name="Madupu R."/>
            <person name="Nelson W.C."/>
            <person name="Ayodeji B."/>
            <person name="Kraul M."/>
            <person name="Shetty J."/>
            <person name="Malek J.A."/>
            <person name="Van Aken S.E."/>
            <person name="Riedmuller S."/>
            <person name="Tettelin H."/>
            <person name="Gill S.R."/>
            <person name="White O."/>
            <person name="Salzberg S.L."/>
            <person name="Hoover D.L."/>
            <person name="Lindler L.E."/>
            <person name="Halling S.M."/>
            <person name="Boyle S.M."/>
            <person name="Fraser C.M."/>
        </authorList>
    </citation>
    <scope>NUCLEOTIDE SEQUENCE [LARGE SCALE GENOMIC DNA]</scope>
    <source>
        <strain>1330</strain>
    </source>
</reference>
<reference key="2">
    <citation type="journal article" date="2011" name="J. Bacteriol.">
        <title>Revised genome sequence of Brucella suis 1330.</title>
        <authorList>
            <person name="Tae H."/>
            <person name="Shallom S."/>
            <person name="Settlage R."/>
            <person name="Preston D."/>
            <person name="Adams L.G."/>
            <person name="Garner H.R."/>
        </authorList>
    </citation>
    <scope>NUCLEOTIDE SEQUENCE [LARGE SCALE GENOMIC DNA]</scope>
    <source>
        <strain>1330</strain>
    </source>
</reference>
<sequence>MPTVNQLIRKPRTAPVKRNKVPALQANPQKRGVCTRVYTTTPKKPNSALRKVAKVRLTNGFEVIGYIPGEGHNLQEHSVVMIRGGRVKDLPGVRYHIIRGVLDTQGVKNRKQRRSKYGAKRPK</sequence>
<dbReference type="EMBL" id="AE014291">
    <property type="protein sequence ID" value="AAN30157.1"/>
    <property type="molecule type" value="Genomic_DNA"/>
</dbReference>
<dbReference type="EMBL" id="CP002997">
    <property type="protein sequence ID" value="AEM18575.1"/>
    <property type="molecule type" value="Genomic_DNA"/>
</dbReference>
<dbReference type="RefSeq" id="WP_002964366.1">
    <property type="nucleotide sequence ID" value="NZ_KN046804.1"/>
</dbReference>
<dbReference type="SMR" id="P63194"/>
<dbReference type="GeneID" id="93016435"/>
<dbReference type="KEGG" id="bms:BR1238"/>
<dbReference type="KEGG" id="bsi:BS1330_I1234"/>
<dbReference type="PATRIC" id="fig|204722.21.peg.3395"/>
<dbReference type="HOGENOM" id="CLU_104295_1_2_5"/>
<dbReference type="PRO" id="PR:P63194"/>
<dbReference type="Proteomes" id="UP000007104">
    <property type="component" value="Chromosome I"/>
</dbReference>
<dbReference type="GO" id="GO:0015935">
    <property type="term" value="C:small ribosomal subunit"/>
    <property type="evidence" value="ECO:0007669"/>
    <property type="project" value="InterPro"/>
</dbReference>
<dbReference type="GO" id="GO:0019843">
    <property type="term" value="F:rRNA binding"/>
    <property type="evidence" value="ECO:0007669"/>
    <property type="project" value="UniProtKB-UniRule"/>
</dbReference>
<dbReference type="GO" id="GO:0003735">
    <property type="term" value="F:structural constituent of ribosome"/>
    <property type="evidence" value="ECO:0007669"/>
    <property type="project" value="InterPro"/>
</dbReference>
<dbReference type="GO" id="GO:0000049">
    <property type="term" value="F:tRNA binding"/>
    <property type="evidence" value="ECO:0007669"/>
    <property type="project" value="UniProtKB-UniRule"/>
</dbReference>
<dbReference type="GO" id="GO:0006412">
    <property type="term" value="P:translation"/>
    <property type="evidence" value="ECO:0007669"/>
    <property type="project" value="UniProtKB-UniRule"/>
</dbReference>
<dbReference type="CDD" id="cd03368">
    <property type="entry name" value="Ribosomal_S12"/>
    <property type="match status" value="1"/>
</dbReference>
<dbReference type="FunFam" id="2.40.50.140:FF:000001">
    <property type="entry name" value="30S ribosomal protein S12"/>
    <property type="match status" value="1"/>
</dbReference>
<dbReference type="Gene3D" id="2.40.50.140">
    <property type="entry name" value="Nucleic acid-binding proteins"/>
    <property type="match status" value="1"/>
</dbReference>
<dbReference type="HAMAP" id="MF_00403_B">
    <property type="entry name" value="Ribosomal_uS12_B"/>
    <property type="match status" value="1"/>
</dbReference>
<dbReference type="InterPro" id="IPR012340">
    <property type="entry name" value="NA-bd_OB-fold"/>
</dbReference>
<dbReference type="InterPro" id="IPR006032">
    <property type="entry name" value="Ribosomal_uS12"/>
</dbReference>
<dbReference type="InterPro" id="IPR005679">
    <property type="entry name" value="Ribosomal_uS12_bac"/>
</dbReference>
<dbReference type="NCBIfam" id="TIGR00981">
    <property type="entry name" value="rpsL_bact"/>
    <property type="match status" value="1"/>
</dbReference>
<dbReference type="PANTHER" id="PTHR11652">
    <property type="entry name" value="30S RIBOSOMAL PROTEIN S12 FAMILY MEMBER"/>
    <property type="match status" value="1"/>
</dbReference>
<dbReference type="Pfam" id="PF00164">
    <property type="entry name" value="Ribosom_S12_S23"/>
    <property type="match status" value="1"/>
</dbReference>
<dbReference type="PIRSF" id="PIRSF002133">
    <property type="entry name" value="Ribosomal_S12/S23"/>
    <property type="match status" value="1"/>
</dbReference>
<dbReference type="PRINTS" id="PR01034">
    <property type="entry name" value="RIBOSOMALS12"/>
</dbReference>
<dbReference type="SUPFAM" id="SSF50249">
    <property type="entry name" value="Nucleic acid-binding proteins"/>
    <property type="match status" value="1"/>
</dbReference>
<dbReference type="PROSITE" id="PS00055">
    <property type="entry name" value="RIBOSOMAL_S12"/>
    <property type="match status" value="1"/>
</dbReference>
<proteinExistence type="inferred from homology"/>